<comment type="function">
    <text evidence="1">Catalyzes the pyruvoyl-dependent decarboxylation of aspartate to produce beta-alanine.</text>
</comment>
<comment type="catalytic activity">
    <reaction evidence="1">
        <text>L-aspartate + H(+) = beta-alanine + CO2</text>
        <dbReference type="Rhea" id="RHEA:19497"/>
        <dbReference type="ChEBI" id="CHEBI:15378"/>
        <dbReference type="ChEBI" id="CHEBI:16526"/>
        <dbReference type="ChEBI" id="CHEBI:29991"/>
        <dbReference type="ChEBI" id="CHEBI:57966"/>
        <dbReference type="EC" id="4.1.1.11"/>
    </reaction>
</comment>
<comment type="cofactor">
    <cofactor evidence="1">
        <name>pyruvate</name>
        <dbReference type="ChEBI" id="CHEBI:15361"/>
    </cofactor>
    <text evidence="1">Binds 1 pyruvoyl group covalently per subunit.</text>
</comment>
<comment type="pathway">
    <text evidence="1">Cofactor biosynthesis; (R)-pantothenate biosynthesis; beta-alanine from L-aspartate: step 1/1.</text>
</comment>
<comment type="subunit">
    <text evidence="1">Heterooctamer of four alpha and four beta subunits.</text>
</comment>
<comment type="subcellular location">
    <subcellularLocation>
        <location evidence="1">Cytoplasm</location>
    </subcellularLocation>
</comment>
<comment type="PTM">
    <text evidence="1">Is synthesized initially as an inactive proenzyme, which is activated by self-cleavage at a specific serine bond to produce a beta-subunit with a hydroxyl group at its C-terminus and an alpha-subunit with a pyruvoyl group at its N-terminus.</text>
</comment>
<comment type="similarity">
    <text evidence="1">Belongs to the PanD family.</text>
</comment>
<evidence type="ECO:0000255" key="1">
    <source>
        <dbReference type="HAMAP-Rule" id="MF_00446"/>
    </source>
</evidence>
<protein>
    <recommendedName>
        <fullName evidence="1">Aspartate 1-decarboxylase</fullName>
        <ecNumber evidence="1">4.1.1.11</ecNumber>
    </recommendedName>
    <alternativeName>
        <fullName evidence="1">Aspartate alpha-decarboxylase</fullName>
    </alternativeName>
    <component>
        <recommendedName>
            <fullName evidence="1">Aspartate 1-decarboxylase beta chain</fullName>
        </recommendedName>
    </component>
    <component>
        <recommendedName>
            <fullName evidence="1">Aspartate 1-decarboxylase alpha chain</fullName>
        </recommendedName>
    </component>
</protein>
<name>PAND_SHIFL</name>
<proteinExistence type="inferred from homology"/>
<reference key="1">
    <citation type="journal article" date="2002" name="Nucleic Acids Res.">
        <title>Genome sequence of Shigella flexneri 2a: insights into pathogenicity through comparison with genomes of Escherichia coli K12 and O157.</title>
        <authorList>
            <person name="Jin Q."/>
            <person name="Yuan Z."/>
            <person name="Xu J."/>
            <person name="Wang Y."/>
            <person name="Shen Y."/>
            <person name="Lu W."/>
            <person name="Wang J."/>
            <person name="Liu H."/>
            <person name="Yang J."/>
            <person name="Yang F."/>
            <person name="Zhang X."/>
            <person name="Zhang J."/>
            <person name="Yang G."/>
            <person name="Wu H."/>
            <person name="Qu D."/>
            <person name="Dong J."/>
            <person name="Sun L."/>
            <person name="Xue Y."/>
            <person name="Zhao A."/>
            <person name="Gao Y."/>
            <person name="Zhu J."/>
            <person name="Kan B."/>
            <person name="Ding K."/>
            <person name="Chen S."/>
            <person name="Cheng H."/>
            <person name="Yao Z."/>
            <person name="He B."/>
            <person name="Chen R."/>
            <person name="Ma D."/>
            <person name="Qiang B."/>
            <person name="Wen Y."/>
            <person name="Hou Y."/>
            <person name="Yu J."/>
        </authorList>
    </citation>
    <scope>NUCLEOTIDE SEQUENCE [LARGE SCALE GENOMIC DNA]</scope>
    <source>
        <strain>301 / Serotype 2a</strain>
    </source>
</reference>
<reference key="2">
    <citation type="journal article" date="2003" name="Infect. Immun.">
        <title>Complete genome sequence and comparative genomics of Shigella flexneri serotype 2a strain 2457T.</title>
        <authorList>
            <person name="Wei J."/>
            <person name="Goldberg M.B."/>
            <person name="Burland V."/>
            <person name="Venkatesan M.M."/>
            <person name="Deng W."/>
            <person name="Fournier G."/>
            <person name="Mayhew G.F."/>
            <person name="Plunkett G. III"/>
            <person name="Rose D.J."/>
            <person name="Darling A."/>
            <person name="Mau B."/>
            <person name="Perna N.T."/>
            <person name="Payne S.M."/>
            <person name="Runyen-Janecky L.J."/>
            <person name="Zhou S."/>
            <person name="Schwartz D.C."/>
            <person name="Blattner F.R."/>
        </authorList>
    </citation>
    <scope>NUCLEOTIDE SEQUENCE [LARGE SCALE GENOMIC DNA]</scope>
    <source>
        <strain>ATCC 700930 / 2457T / Serotype 2a</strain>
    </source>
</reference>
<organism>
    <name type="scientific">Shigella flexneri</name>
    <dbReference type="NCBI Taxonomy" id="623"/>
    <lineage>
        <taxon>Bacteria</taxon>
        <taxon>Pseudomonadati</taxon>
        <taxon>Pseudomonadota</taxon>
        <taxon>Gammaproteobacteria</taxon>
        <taxon>Enterobacterales</taxon>
        <taxon>Enterobacteriaceae</taxon>
        <taxon>Shigella</taxon>
    </lineage>
</organism>
<sequence length="126" mass="13834">MIRTMLQGKLHRVKVTHADLHYEGSCAIDQDFLDAAGILENEAIDIWNVTNGKRFSTYAIAAERGSRIISVNGAAAHCASVGDIVIIASFVTMPDEEARTWRPNVAYFEGDNEMKRTAKAIPVQVA</sequence>
<keyword id="KW-0068">Autocatalytic cleavage</keyword>
<keyword id="KW-0963">Cytoplasm</keyword>
<keyword id="KW-0210">Decarboxylase</keyword>
<keyword id="KW-0456">Lyase</keyword>
<keyword id="KW-0566">Pantothenate biosynthesis</keyword>
<keyword id="KW-0670">Pyruvate</keyword>
<keyword id="KW-1185">Reference proteome</keyword>
<keyword id="KW-0704">Schiff base</keyword>
<keyword id="KW-0865">Zymogen</keyword>
<dbReference type="EC" id="4.1.1.11" evidence="1"/>
<dbReference type="EMBL" id="AE005674">
    <property type="protein sequence ID" value="AAN41791.2"/>
    <property type="molecule type" value="Genomic_DNA"/>
</dbReference>
<dbReference type="EMBL" id="AE014073">
    <property type="protein sequence ID" value="AAP15672.1"/>
    <property type="molecule type" value="Genomic_DNA"/>
</dbReference>
<dbReference type="RefSeq" id="NP_706084.2">
    <property type="nucleotide sequence ID" value="NC_004337.2"/>
</dbReference>
<dbReference type="RefSeq" id="WP_000621515.1">
    <property type="nucleotide sequence ID" value="NZ_WPGW01000007.1"/>
</dbReference>
<dbReference type="SMR" id="P0A793"/>
<dbReference type="STRING" id="198214.SF0128"/>
<dbReference type="DrugBank" id="DB02175">
    <property type="generic name" value="Malonic acid"/>
</dbReference>
<dbReference type="DrugBank" id="DB03382">
    <property type="generic name" value="S-oxy-L-cysteine"/>
</dbReference>
<dbReference type="PaxDb" id="198214-SF0128"/>
<dbReference type="GeneID" id="1024489"/>
<dbReference type="GeneID" id="93777305"/>
<dbReference type="KEGG" id="sfl:SF0128"/>
<dbReference type="KEGG" id="sfx:S0130"/>
<dbReference type="PATRIC" id="fig|198214.7.peg.144"/>
<dbReference type="HOGENOM" id="CLU_115305_2_1_6"/>
<dbReference type="UniPathway" id="UPA00028">
    <property type="reaction ID" value="UER00002"/>
</dbReference>
<dbReference type="Proteomes" id="UP000001006">
    <property type="component" value="Chromosome"/>
</dbReference>
<dbReference type="Proteomes" id="UP000002673">
    <property type="component" value="Chromosome"/>
</dbReference>
<dbReference type="GO" id="GO:0005829">
    <property type="term" value="C:cytosol"/>
    <property type="evidence" value="ECO:0007669"/>
    <property type="project" value="TreeGrafter"/>
</dbReference>
<dbReference type="GO" id="GO:0004068">
    <property type="term" value="F:aspartate 1-decarboxylase activity"/>
    <property type="evidence" value="ECO:0007669"/>
    <property type="project" value="UniProtKB-UniRule"/>
</dbReference>
<dbReference type="GO" id="GO:0006523">
    <property type="term" value="P:alanine biosynthetic process"/>
    <property type="evidence" value="ECO:0007669"/>
    <property type="project" value="InterPro"/>
</dbReference>
<dbReference type="GO" id="GO:0015940">
    <property type="term" value="P:pantothenate biosynthetic process"/>
    <property type="evidence" value="ECO:0007669"/>
    <property type="project" value="UniProtKB-UniRule"/>
</dbReference>
<dbReference type="CDD" id="cd06919">
    <property type="entry name" value="Asp_decarbox"/>
    <property type="match status" value="1"/>
</dbReference>
<dbReference type="FunFam" id="2.40.40.20:FF:000004">
    <property type="entry name" value="Aspartate 1-decarboxylase"/>
    <property type="match status" value="1"/>
</dbReference>
<dbReference type="Gene3D" id="2.40.40.20">
    <property type="match status" value="1"/>
</dbReference>
<dbReference type="HAMAP" id="MF_00446">
    <property type="entry name" value="PanD"/>
    <property type="match status" value="1"/>
</dbReference>
<dbReference type="InterPro" id="IPR009010">
    <property type="entry name" value="Asp_de-COase-like_dom_sf"/>
</dbReference>
<dbReference type="InterPro" id="IPR003190">
    <property type="entry name" value="Asp_decarbox"/>
</dbReference>
<dbReference type="NCBIfam" id="TIGR00223">
    <property type="entry name" value="panD"/>
    <property type="match status" value="1"/>
</dbReference>
<dbReference type="PANTHER" id="PTHR21012">
    <property type="entry name" value="ASPARTATE 1-DECARBOXYLASE"/>
    <property type="match status" value="1"/>
</dbReference>
<dbReference type="PANTHER" id="PTHR21012:SF0">
    <property type="entry name" value="ASPARTATE 1-DECARBOXYLASE"/>
    <property type="match status" value="1"/>
</dbReference>
<dbReference type="Pfam" id="PF02261">
    <property type="entry name" value="Asp_decarbox"/>
    <property type="match status" value="1"/>
</dbReference>
<dbReference type="PIRSF" id="PIRSF006246">
    <property type="entry name" value="Asp_decarbox"/>
    <property type="match status" value="1"/>
</dbReference>
<dbReference type="SUPFAM" id="SSF50692">
    <property type="entry name" value="ADC-like"/>
    <property type="match status" value="1"/>
</dbReference>
<feature type="chain" id="PRO_0000023155" description="Aspartate 1-decarboxylase beta chain" evidence="1">
    <location>
        <begin position="1"/>
        <end position="24"/>
    </location>
</feature>
<feature type="chain" id="PRO_0000023156" description="Aspartate 1-decarboxylase alpha chain" evidence="1">
    <location>
        <begin position="25"/>
        <end position="126"/>
    </location>
</feature>
<feature type="active site" description="Schiff-base intermediate with substrate; via pyruvic acid" evidence="1">
    <location>
        <position position="25"/>
    </location>
</feature>
<feature type="active site" description="Proton donor" evidence="1">
    <location>
        <position position="58"/>
    </location>
</feature>
<feature type="binding site" evidence="1">
    <location>
        <position position="57"/>
    </location>
    <ligand>
        <name>substrate</name>
    </ligand>
</feature>
<feature type="binding site" evidence="1">
    <location>
        <begin position="73"/>
        <end position="75"/>
    </location>
    <ligand>
        <name>substrate</name>
    </ligand>
</feature>
<feature type="modified residue" description="Pyruvic acid (Ser)" evidence="1">
    <location>
        <position position="25"/>
    </location>
</feature>
<gene>
    <name evidence="1" type="primary">panD</name>
    <name type="ordered locus">SF0128</name>
    <name type="ordered locus">S0130</name>
</gene>
<accession>P0A793</accession>
<accession>P31664</accession>
<accession>Q8KMY8</accession>